<keyword id="KW-0106">Calcium</keyword>
<keyword id="KW-1003">Cell membrane</keyword>
<keyword id="KW-0963">Cytoplasm</keyword>
<keyword id="KW-0333">Golgi apparatus</keyword>
<keyword id="KW-0449">Lipoprotein</keyword>
<keyword id="KW-0472">Membrane</keyword>
<keyword id="KW-0479">Metal-binding</keyword>
<keyword id="KW-0519">Myristate</keyword>
<keyword id="KW-1185">Reference proteome</keyword>
<keyword id="KW-0677">Repeat</keyword>
<keyword id="KW-0770">Synapse</keyword>
<reference key="1">
    <citation type="submission" date="1997-08" db="EMBL/GenBank/DDBJ databases">
        <title>Intra-renal expression of mNCS-1.</title>
        <authorList>
            <person name="Mount D.B."/>
        </authorList>
    </citation>
    <scope>NUCLEOTIDE SEQUENCE [MRNA]</scope>
    <source>
        <strain>C57BL/6J</strain>
    </source>
</reference>
<reference key="2">
    <citation type="journal article" date="2009" name="PLoS Biol.">
        <title>Lineage-specific biology revealed by a finished genome assembly of the mouse.</title>
        <authorList>
            <person name="Church D.M."/>
            <person name="Goodstadt L."/>
            <person name="Hillier L.W."/>
            <person name="Zody M.C."/>
            <person name="Goldstein S."/>
            <person name="She X."/>
            <person name="Bult C.J."/>
            <person name="Agarwala R."/>
            <person name="Cherry J.L."/>
            <person name="DiCuccio M."/>
            <person name="Hlavina W."/>
            <person name="Kapustin Y."/>
            <person name="Meric P."/>
            <person name="Maglott D."/>
            <person name="Birtle Z."/>
            <person name="Marques A.C."/>
            <person name="Graves T."/>
            <person name="Zhou S."/>
            <person name="Teague B."/>
            <person name="Potamousis K."/>
            <person name="Churas C."/>
            <person name="Place M."/>
            <person name="Herschleb J."/>
            <person name="Runnheim R."/>
            <person name="Forrest D."/>
            <person name="Amos-Landgraf J."/>
            <person name="Schwartz D.C."/>
            <person name="Cheng Z."/>
            <person name="Lindblad-Toh K."/>
            <person name="Eichler E.E."/>
            <person name="Ponting C.P."/>
        </authorList>
    </citation>
    <scope>NUCLEOTIDE SEQUENCE [LARGE SCALE GENOMIC DNA]</scope>
    <source>
        <strain>C57BL/6J</strain>
    </source>
</reference>
<reference key="3">
    <citation type="journal article" date="2004" name="Genome Res.">
        <title>The status, quality, and expansion of the NIH full-length cDNA project: the Mammalian Gene Collection (MGC).</title>
        <authorList>
            <consortium name="The MGC Project Team"/>
        </authorList>
    </citation>
    <scope>NUCLEOTIDE SEQUENCE [LARGE SCALE MRNA]</scope>
    <source>
        <strain>C57BL/6J</strain>
        <tissue>Brain</tissue>
    </source>
</reference>
<reference key="4">
    <citation type="journal article" date="2005" name="Science">
        <title>The transcriptional landscape of the mammalian genome.</title>
        <authorList>
            <person name="Carninci P."/>
            <person name="Kasukawa T."/>
            <person name="Katayama S."/>
            <person name="Gough J."/>
            <person name="Frith M.C."/>
            <person name="Maeda N."/>
            <person name="Oyama R."/>
            <person name="Ravasi T."/>
            <person name="Lenhard B."/>
            <person name="Wells C."/>
            <person name="Kodzius R."/>
            <person name="Shimokawa K."/>
            <person name="Bajic V.B."/>
            <person name="Brenner S.E."/>
            <person name="Batalov S."/>
            <person name="Forrest A.R."/>
            <person name="Zavolan M."/>
            <person name="Davis M.J."/>
            <person name="Wilming L.G."/>
            <person name="Aidinis V."/>
            <person name="Allen J.E."/>
            <person name="Ambesi-Impiombato A."/>
            <person name="Apweiler R."/>
            <person name="Aturaliya R.N."/>
            <person name="Bailey T.L."/>
            <person name="Bansal M."/>
            <person name="Baxter L."/>
            <person name="Beisel K.W."/>
            <person name="Bersano T."/>
            <person name="Bono H."/>
            <person name="Chalk A.M."/>
            <person name="Chiu K.P."/>
            <person name="Choudhary V."/>
            <person name="Christoffels A."/>
            <person name="Clutterbuck D.R."/>
            <person name="Crowe M.L."/>
            <person name="Dalla E."/>
            <person name="Dalrymple B.P."/>
            <person name="de Bono B."/>
            <person name="Della Gatta G."/>
            <person name="di Bernardo D."/>
            <person name="Down T."/>
            <person name="Engstrom P."/>
            <person name="Fagiolini M."/>
            <person name="Faulkner G."/>
            <person name="Fletcher C.F."/>
            <person name="Fukushima T."/>
            <person name="Furuno M."/>
            <person name="Futaki S."/>
            <person name="Gariboldi M."/>
            <person name="Georgii-Hemming P."/>
            <person name="Gingeras T.R."/>
            <person name="Gojobori T."/>
            <person name="Green R.E."/>
            <person name="Gustincich S."/>
            <person name="Harbers M."/>
            <person name="Hayashi Y."/>
            <person name="Hensch T.K."/>
            <person name="Hirokawa N."/>
            <person name="Hill D."/>
            <person name="Huminiecki L."/>
            <person name="Iacono M."/>
            <person name="Ikeo K."/>
            <person name="Iwama A."/>
            <person name="Ishikawa T."/>
            <person name="Jakt M."/>
            <person name="Kanapin A."/>
            <person name="Katoh M."/>
            <person name="Kawasawa Y."/>
            <person name="Kelso J."/>
            <person name="Kitamura H."/>
            <person name="Kitano H."/>
            <person name="Kollias G."/>
            <person name="Krishnan S.P."/>
            <person name="Kruger A."/>
            <person name="Kummerfeld S.K."/>
            <person name="Kurochkin I.V."/>
            <person name="Lareau L.F."/>
            <person name="Lazarevic D."/>
            <person name="Lipovich L."/>
            <person name="Liu J."/>
            <person name="Liuni S."/>
            <person name="McWilliam S."/>
            <person name="Madan Babu M."/>
            <person name="Madera M."/>
            <person name="Marchionni L."/>
            <person name="Matsuda H."/>
            <person name="Matsuzawa S."/>
            <person name="Miki H."/>
            <person name="Mignone F."/>
            <person name="Miyake S."/>
            <person name="Morris K."/>
            <person name="Mottagui-Tabar S."/>
            <person name="Mulder N."/>
            <person name="Nakano N."/>
            <person name="Nakauchi H."/>
            <person name="Ng P."/>
            <person name="Nilsson R."/>
            <person name="Nishiguchi S."/>
            <person name="Nishikawa S."/>
            <person name="Nori F."/>
            <person name="Ohara O."/>
            <person name="Okazaki Y."/>
            <person name="Orlando V."/>
            <person name="Pang K.C."/>
            <person name="Pavan W.J."/>
            <person name="Pavesi G."/>
            <person name="Pesole G."/>
            <person name="Petrovsky N."/>
            <person name="Piazza S."/>
            <person name="Reed J."/>
            <person name="Reid J.F."/>
            <person name="Ring B.Z."/>
            <person name="Ringwald M."/>
            <person name="Rost B."/>
            <person name="Ruan Y."/>
            <person name="Salzberg S.L."/>
            <person name="Sandelin A."/>
            <person name="Schneider C."/>
            <person name="Schoenbach C."/>
            <person name="Sekiguchi K."/>
            <person name="Semple C.A."/>
            <person name="Seno S."/>
            <person name="Sessa L."/>
            <person name="Sheng Y."/>
            <person name="Shibata Y."/>
            <person name="Shimada H."/>
            <person name="Shimada K."/>
            <person name="Silva D."/>
            <person name="Sinclair B."/>
            <person name="Sperling S."/>
            <person name="Stupka E."/>
            <person name="Sugiura K."/>
            <person name="Sultana R."/>
            <person name="Takenaka Y."/>
            <person name="Taki K."/>
            <person name="Tammoja K."/>
            <person name="Tan S.L."/>
            <person name="Tang S."/>
            <person name="Taylor M.S."/>
            <person name="Tegner J."/>
            <person name="Teichmann S.A."/>
            <person name="Ueda H.R."/>
            <person name="van Nimwegen E."/>
            <person name="Verardo R."/>
            <person name="Wei C.L."/>
            <person name="Yagi K."/>
            <person name="Yamanishi H."/>
            <person name="Zabarovsky E."/>
            <person name="Zhu S."/>
            <person name="Zimmer A."/>
            <person name="Hide W."/>
            <person name="Bult C."/>
            <person name="Grimmond S.M."/>
            <person name="Teasdale R.D."/>
            <person name="Liu E.T."/>
            <person name="Brusic V."/>
            <person name="Quackenbush J."/>
            <person name="Wahlestedt C."/>
            <person name="Mattick J.S."/>
            <person name="Hume D.A."/>
            <person name="Kai C."/>
            <person name="Sasaki D."/>
            <person name="Tomaru Y."/>
            <person name="Fukuda S."/>
            <person name="Kanamori-Katayama M."/>
            <person name="Suzuki M."/>
            <person name="Aoki J."/>
            <person name="Arakawa T."/>
            <person name="Iida J."/>
            <person name="Imamura K."/>
            <person name="Itoh M."/>
            <person name="Kato T."/>
            <person name="Kawaji H."/>
            <person name="Kawagashira N."/>
            <person name="Kawashima T."/>
            <person name="Kojima M."/>
            <person name="Kondo S."/>
            <person name="Konno H."/>
            <person name="Nakano K."/>
            <person name="Ninomiya N."/>
            <person name="Nishio T."/>
            <person name="Okada M."/>
            <person name="Plessy C."/>
            <person name="Shibata K."/>
            <person name="Shiraki T."/>
            <person name="Suzuki S."/>
            <person name="Tagami M."/>
            <person name="Waki K."/>
            <person name="Watahiki A."/>
            <person name="Okamura-Oho Y."/>
            <person name="Suzuki H."/>
            <person name="Kawai J."/>
            <person name="Hayashizaki Y."/>
        </authorList>
    </citation>
    <scope>NUCLEOTIDE SEQUENCE [LARGE SCALE MRNA] OF 20-190</scope>
    <source>
        <strain>C57BL/6J</strain>
        <tissue>Embryo</tissue>
    </source>
</reference>
<reference key="5">
    <citation type="journal article" date="2010" name="Cell">
        <title>A tissue-specific atlas of mouse protein phosphorylation and expression.</title>
        <authorList>
            <person name="Huttlin E.L."/>
            <person name="Jedrychowski M.P."/>
            <person name="Elias J.E."/>
            <person name="Goswami T."/>
            <person name="Rad R."/>
            <person name="Beausoleil S.A."/>
            <person name="Villen J."/>
            <person name="Haas W."/>
            <person name="Sowa M.E."/>
            <person name="Gygi S.P."/>
        </authorList>
    </citation>
    <scope>IDENTIFICATION BY MASS SPECTROMETRY [LARGE SCALE ANALYSIS]</scope>
    <source>
        <tissue>Brain</tissue>
    </source>
</reference>
<sequence length="190" mass="21879">MGKSNSKLKPEVVEELTRKTYFTEKEVQQWYKGFIKDCPSGQLDAAGFQKIYKQFFPFGDPTKFATFVFNVFDENKDGRIEFSEFIQALSVTSRGTLDEKLRWAFKLYDLDNDGYITRNEMLDIVDAIYQMVGNTVELPEEENTPEKRVDRIFAMMDKNADGKLTLQEFQEGSKADPSIVQALSLYDGLV</sequence>
<comment type="function">
    <text evidence="1">Neuronal calcium sensor, regulator of G protein-coupled receptor phosphorylation in a calcium dependent manner. Directly regulates GRK1 (RHOK), but not GRK2 to GRK5. Can substitute for calmodulin (By similarity). Stimulates PI4KB kinase activity (By similarity). Involved in long-term synaptic plasticity through its interaction with PICK1 (By similarity). May also play a role in neuron differentiation through inhibition of the activity of N-type voltage-gated calcium channel (By similarity).</text>
</comment>
<comment type="subunit">
    <text evidence="2 3">Monomer (By similarity). Interacts with KCND2 (By similarity). Interacts in a calcium-independent manner with PI4KB (By similarity). This binding competes with CALN2/CABP7 binding to PI4KB (By similarity). Interacts in a calcium-dependent manner with PICK1 (via AH domain) (By similarity). Interacts with ARF1, ARF3, ARF5 and ARF6 (By similarity). Interacts with IL1RAPL1 (By similarity). Interacts with RIC8A; interaction is favored in the absence of Ca(2+) and myristoylation of NCS1 is not required (By similarity).</text>
</comment>
<comment type="subcellular location">
    <subcellularLocation>
        <location evidence="2">Golgi apparatus</location>
    </subcellularLocation>
    <subcellularLocation>
        <location evidence="2">Postsynaptic density</location>
    </subcellularLocation>
    <subcellularLocation>
        <location evidence="2">Cytoplasm</location>
        <location evidence="2">Perinuclear region</location>
    </subcellularLocation>
    <subcellularLocation>
        <location evidence="3">Cytoplasm</location>
    </subcellularLocation>
    <subcellularLocation>
        <location evidence="2">Cell membrane</location>
        <topology evidence="2">Peripheral membrane protein</topology>
    </subcellularLocation>
    <subcellularLocation>
        <location evidence="2 3">Membrane</location>
        <topology evidence="2">Lipid-anchor</topology>
    </subcellularLocation>
    <text evidence="2">Associated with Golgi stacks. Post-synaptic densities of dendrites, and in the pre-synaptic nerve terminal at neuromuscular junctions.</text>
</comment>
<comment type="miscellaneous">
    <text evidence="1">Binds 3 calcium ions via the second, third and fourth EF-hand.</text>
</comment>
<comment type="similarity">
    <text evidence="5">Belongs to the recoverin family.</text>
</comment>
<feature type="initiator methionine" description="Removed" evidence="2">
    <location>
        <position position="1"/>
    </location>
</feature>
<feature type="chain" id="PRO_0000073789" description="Neuronal calcium sensor 1">
    <location>
        <begin position="2"/>
        <end position="190"/>
    </location>
</feature>
<feature type="domain" description="EF-hand 1" evidence="5">
    <location>
        <begin position="24"/>
        <end position="59"/>
    </location>
</feature>
<feature type="domain" description="EF-hand 2" evidence="4">
    <location>
        <begin position="60"/>
        <end position="95"/>
    </location>
</feature>
<feature type="domain" description="EF-hand 3" evidence="4">
    <location>
        <begin position="96"/>
        <end position="131"/>
    </location>
</feature>
<feature type="domain" description="EF-hand 4" evidence="4">
    <location>
        <begin position="144"/>
        <end position="179"/>
    </location>
</feature>
<feature type="region of interest" description="Interaction with IL1RAPL1" evidence="2">
    <location>
        <begin position="174"/>
        <end position="190"/>
    </location>
</feature>
<feature type="binding site" evidence="4">
    <location>
        <position position="73"/>
    </location>
    <ligand>
        <name>Ca(2+)</name>
        <dbReference type="ChEBI" id="CHEBI:29108"/>
        <label>1</label>
    </ligand>
</feature>
<feature type="binding site" evidence="4">
    <location>
        <position position="75"/>
    </location>
    <ligand>
        <name>Ca(2+)</name>
        <dbReference type="ChEBI" id="CHEBI:29108"/>
        <label>1</label>
    </ligand>
</feature>
<feature type="binding site" evidence="4">
    <location>
        <position position="77"/>
    </location>
    <ligand>
        <name>Ca(2+)</name>
        <dbReference type="ChEBI" id="CHEBI:29108"/>
        <label>1</label>
    </ligand>
</feature>
<feature type="binding site" evidence="4">
    <location>
        <position position="79"/>
    </location>
    <ligand>
        <name>Ca(2+)</name>
        <dbReference type="ChEBI" id="CHEBI:29108"/>
        <label>1</label>
    </ligand>
</feature>
<feature type="binding site" evidence="3">
    <location>
        <position position="81"/>
    </location>
    <ligand>
        <name>Ca(2+)</name>
        <dbReference type="ChEBI" id="CHEBI:29108"/>
        <label>1</label>
    </ligand>
</feature>
<feature type="binding site" evidence="4">
    <location>
        <position position="84"/>
    </location>
    <ligand>
        <name>Ca(2+)</name>
        <dbReference type="ChEBI" id="CHEBI:29108"/>
        <label>1</label>
    </ligand>
</feature>
<feature type="binding site" evidence="4">
    <location>
        <position position="109"/>
    </location>
    <ligand>
        <name>Ca(2+)</name>
        <dbReference type="ChEBI" id="CHEBI:29108"/>
        <label>2</label>
    </ligand>
</feature>
<feature type="binding site" evidence="4">
    <location>
        <position position="111"/>
    </location>
    <ligand>
        <name>Ca(2+)</name>
        <dbReference type="ChEBI" id="CHEBI:29108"/>
        <label>2</label>
    </ligand>
</feature>
<feature type="binding site" evidence="4">
    <location>
        <position position="113"/>
    </location>
    <ligand>
        <name>Ca(2+)</name>
        <dbReference type="ChEBI" id="CHEBI:29108"/>
        <label>2</label>
    </ligand>
</feature>
<feature type="binding site" evidence="4">
    <location>
        <position position="115"/>
    </location>
    <ligand>
        <name>Ca(2+)</name>
        <dbReference type="ChEBI" id="CHEBI:29108"/>
        <label>2</label>
    </ligand>
</feature>
<feature type="binding site" evidence="4">
    <location>
        <position position="120"/>
    </location>
    <ligand>
        <name>Ca(2+)</name>
        <dbReference type="ChEBI" id="CHEBI:29108"/>
        <label>2</label>
    </ligand>
</feature>
<feature type="binding site" evidence="4">
    <location>
        <position position="157"/>
    </location>
    <ligand>
        <name>Ca(2+)</name>
        <dbReference type="ChEBI" id="CHEBI:29108"/>
        <label>3</label>
    </ligand>
</feature>
<feature type="binding site" evidence="4">
    <location>
        <position position="159"/>
    </location>
    <ligand>
        <name>Ca(2+)</name>
        <dbReference type="ChEBI" id="CHEBI:29108"/>
        <label>3</label>
    </ligand>
</feature>
<feature type="binding site" evidence="4">
    <location>
        <position position="161"/>
    </location>
    <ligand>
        <name>Ca(2+)</name>
        <dbReference type="ChEBI" id="CHEBI:29108"/>
        <label>3</label>
    </ligand>
</feature>
<feature type="binding site" evidence="4">
    <location>
        <position position="163"/>
    </location>
    <ligand>
        <name>Ca(2+)</name>
        <dbReference type="ChEBI" id="CHEBI:29108"/>
        <label>3</label>
    </ligand>
</feature>
<feature type="binding site" evidence="4">
    <location>
        <position position="168"/>
    </location>
    <ligand>
        <name>Ca(2+)</name>
        <dbReference type="ChEBI" id="CHEBI:29108"/>
        <label>3</label>
    </ligand>
</feature>
<feature type="lipid moiety-binding region" description="N-myristoyl glycine" evidence="2">
    <location>
        <position position="2"/>
    </location>
</feature>
<feature type="sequence conflict" description="In Ref. 4; BAC37557." evidence="5" ref="4">
    <original>K</original>
    <variation>E</variation>
    <location>
        <position position="63"/>
    </location>
</feature>
<gene>
    <name type="primary">Ncs1</name>
    <name type="synonym">Freq</name>
</gene>
<dbReference type="EMBL" id="AF020184">
    <property type="protein sequence ID" value="AAD01642.1"/>
    <property type="molecule type" value="mRNA"/>
</dbReference>
<dbReference type="EMBL" id="AL732572">
    <property type="status" value="NOT_ANNOTATED_CDS"/>
    <property type="molecule type" value="Genomic_DNA"/>
</dbReference>
<dbReference type="EMBL" id="BC059825">
    <property type="protein sequence ID" value="AAH59825.1"/>
    <property type="molecule type" value="mRNA"/>
</dbReference>
<dbReference type="EMBL" id="AK079136">
    <property type="protein sequence ID" value="BAC37557.1"/>
    <property type="molecule type" value="mRNA"/>
</dbReference>
<dbReference type="CCDS" id="CCDS15896.1"/>
<dbReference type="RefSeq" id="NP_062655.1">
    <property type="nucleotide sequence ID" value="NM_019681.3"/>
</dbReference>
<dbReference type="SMR" id="Q8BNY6"/>
<dbReference type="BioGRID" id="199742">
    <property type="interactions" value="4"/>
</dbReference>
<dbReference type="DIP" id="DIP-61316N"/>
<dbReference type="FunCoup" id="Q8BNY6">
    <property type="interactions" value="654"/>
</dbReference>
<dbReference type="IntAct" id="Q8BNY6">
    <property type="interactions" value="3"/>
</dbReference>
<dbReference type="MINT" id="Q8BNY6"/>
<dbReference type="STRING" id="10090.ENSMUSP00000000199"/>
<dbReference type="iPTMnet" id="Q8BNY6"/>
<dbReference type="PhosphoSitePlus" id="Q8BNY6"/>
<dbReference type="PaxDb" id="10090-ENSMUSP00000000199"/>
<dbReference type="PeptideAtlas" id="Q8BNY6"/>
<dbReference type="ProteomicsDB" id="293636"/>
<dbReference type="Pumba" id="Q8BNY6"/>
<dbReference type="Antibodypedia" id="4347">
    <property type="antibodies" value="375 antibodies from 38 providers"/>
</dbReference>
<dbReference type="DNASU" id="14299"/>
<dbReference type="Ensembl" id="ENSMUST00000000199.8">
    <property type="protein sequence ID" value="ENSMUSP00000000199.8"/>
    <property type="gene ID" value="ENSMUSG00000062661.7"/>
</dbReference>
<dbReference type="GeneID" id="14299"/>
<dbReference type="KEGG" id="mmu:14299"/>
<dbReference type="UCSC" id="uc008jdq.1">
    <property type="organism name" value="mouse"/>
</dbReference>
<dbReference type="AGR" id="MGI:109166"/>
<dbReference type="CTD" id="23413"/>
<dbReference type="MGI" id="MGI:109166">
    <property type="gene designation" value="Ncs1"/>
</dbReference>
<dbReference type="VEuPathDB" id="HostDB:ENSMUSG00000062661"/>
<dbReference type="eggNOG" id="KOG0044">
    <property type="taxonomic scope" value="Eukaryota"/>
</dbReference>
<dbReference type="GeneTree" id="ENSGT00940000154645"/>
<dbReference type="HOGENOM" id="CLU_072366_1_2_1"/>
<dbReference type="InParanoid" id="Q8BNY6"/>
<dbReference type="OMA" id="EYVFNVF"/>
<dbReference type="OrthoDB" id="191686at2759"/>
<dbReference type="PhylomeDB" id="Q8BNY6"/>
<dbReference type="TreeFam" id="TF300009"/>
<dbReference type="BioGRID-ORCS" id="14299">
    <property type="hits" value="3 hits in 78 CRISPR screens"/>
</dbReference>
<dbReference type="ChiTaRS" id="Ncs1">
    <property type="organism name" value="mouse"/>
</dbReference>
<dbReference type="PRO" id="PR:Q8BNY6"/>
<dbReference type="Proteomes" id="UP000000589">
    <property type="component" value="Chromosome 2"/>
</dbReference>
<dbReference type="RNAct" id="Q8BNY6">
    <property type="molecule type" value="protein"/>
</dbReference>
<dbReference type="Bgee" id="ENSMUSG00000062661">
    <property type="expression patterns" value="Expressed in dentate gyrus of hippocampal formation granule cell and 206 other cell types or tissues"/>
</dbReference>
<dbReference type="ExpressionAtlas" id="Q8BNY6">
    <property type="expression patterns" value="baseline and differential"/>
</dbReference>
<dbReference type="GO" id="GO:0030424">
    <property type="term" value="C:axon"/>
    <property type="evidence" value="ECO:0000314"/>
    <property type="project" value="MGI"/>
</dbReference>
<dbReference type="GO" id="GO:0005829">
    <property type="term" value="C:cytosol"/>
    <property type="evidence" value="ECO:0007669"/>
    <property type="project" value="Ensembl"/>
</dbReference>
<dbReference type="GO" id="GO:0030425">
    <property type="term" value="C:dendrite"/>
    <property type="evidence" value="ECO:0000314"/>
    <property type="project" value="MGI"/>
</dbReference>
<dbReference type="GO" id="GO:0005794">
    <property type="term" value="C:Golgi apparatus"/>
    <property type="evidence" value="ECO:0007669"/>
    <property type="project" value="UniProtKB-SubCell"/>
</dbReference>
<dbReference type="GO" id="GO:0048471">
    <property type="term" value="C:perinuclear region of cytoplasm"/>
    <property type="evidence" value="ECO:0007669"/>
    <property type="project" value="UniProtKB-SubCell"/>
</dbReference>
<dbReference type="GO" id="GO:0005886">
    <property type="term" value="C:plasma membrane"/>
    <property type="evidence" value="ECO:0007669"/>
    <property type="project" value="UniProtKB-SubCell"/>
</dbReference>
<dbReference type="GO" id="GO:0014069">
    <property type="term" value="C:postsynaptic density"/>
    <property type="evidence" value="ECO:0007669"/>
    <property type="project" value="UniProtKB-SubCell"/>
</dbReference>
<dbReference type="GO" id="GO:0005509">
    <property type="term" value="F:calcium ion binding"/>
    <property type="evidence" value="ECO:0000304"/>
    <property type="project" value="MGI"/>
</dbReference>
<dbReference type="GO" id="GO:0005245">
    <property type="term" value="F:voltage-gated calcium channel activity"/>
    <property type="evidence" value="ECO:0000250"/>
    <property type="project" value="UniProtKB"/>
</dbReference>
<dbReference type="GO" id="GO:0050806">
    <property type="term" value="P:positive regulation of synaptic transmission"/>
    <property type="evidence" value="ECO:0000304"/>
    <property type="project" value="MGI"/>
</dbReference>
<dbReference type="GO" id="GO:0010975">
    <property type="term" value="P:regulation of neuron projection development"/>
    <property type="evidence" value="ECO:0000250"/>
    <property type="project" value="UniProtKB"/>
</dbReference>
<dbReference type="CDD" id="cd00051">
    <property type="entry name" value="EFh"/>
    <property type="match status" value="2"/>
</dbReference>
<dbReference type="FunFam" id="1.10.238.10:FF:000009">
    <property type="entry name" value="Visinin-like protein 1"/>
    <property type="match status" value="1"/>
</dbReference>
<dbReference type="Gene3D" id="1.10.238.10">
    <property type="entry name" value="EF-hand"/>
    <property type="match status" value="1"/>
</dbReference>
<dbReference type="InterPro" id="IPR011992">
    <property type="entry name" value="EF-hand-dom_pair"/>
</dbReference>
<dbReference type="InterPro" id="IPR018247">
    <property type="entry name" value="EF_Hand_1_Ca_BS"/>
</dbReference>
<dbReference type="InterPro" id="IPR002048">
    <property type="entry name" value="EF_hand_dom"/>
</dbReference>
<dbReference type="InterPro" id="IPR028846">
    <property type="entry name" value="Recoverin"/>
</dbReference>
<dbReference type="PANTHER" id="PTHR23055">
    <property type="entry name" value="CALCIUM BINDING PROTEINS"/>
    <property type="match status" value="1"/>
</dbReference>
<dbReference type="PANTHER" id="PTHR23055:SF198">
    <property type="entry name" value="NEURONAL CALCIUM SENSOR 1"/>
    <property type="match status" value="1"/>
</dbReference>
<dbReference type="Pfam" id="PF00036">
    <property type="entry name" value="EF-hand_1"/>
    <property type="match status" value="1"/>
</dbReference>
<dbReference type="Pfam" id="PF13499">
    <property type="entry name" value="EF-hand_7"/>
    <property type="match status" value="1"/>
</dbReference>
<dbReference type="PRINTS" id="PR00450">
    <property type="entry name" value="RECOVERIN"/>
</dbReference>
<dbReference type="SMART" id="SM00054">
    <property type="entry name" value="EFh"/>
    <property type="match status" value="3"/>
</dbReference>
<dbReference type="SUPFAM" id="SSF47473">
    <property type="entry name" value="EF-hand"/>
    <property type="match status" value="1"/>
</dbReference>
<dbReference type="PROSITE" id="PS00018">
    <property type="entry name" value="EF_HAND_1"/>
    <property type="match status" value="3"/>
</dbReference>
<dbReference type="PROSITE" id="PS50222">
    <property type="entry name" value="EF_HAND_2"/>
    <property type="match status" value="3"/>
</dbReference>
<protein>
    <recommendedName>
        <fullName>Neuronal calcium sensor 1</fullName>
        <shortName>NCS-1</shortName>
    </recommendedName>
    <alternativeName>
        <fullName>Frequenin homolog</fullName>
    </alternativeName>
</protein>
<proteinExistence type="evidence at protein level"/>
<organism>
    <name type="scientific">Mus musculus</name>
    <name type="common">Mouse</name>
    <dbReference type="NCBI Taxonomy" id="10090"/>
    <lineage>
        <taxon>Eukaryota</taxon>
        <taxon>Metazoa</taxon>
        <taxon>Chordata</taxon>
        <taxon>Craniata</taxon>
        <taxon>Vertebrata</taxon>
        <taxon>Euteleostomi</taxon>
        <taxon>Mammalia</taxon>
        <taxon>Eutheria</taxon>
        <taxon>Euarchontoglires</taxon>
        <taxon>Glires</taxon>
        <taxon>Rodentia</taxon>
        <taxon>Myomorpha</taxon>
        <taxon>Muroidea</taxon>
        <taxon>Muridae</taxon>
        <taxon>Murinae</taxon>
        <taxon>Mus</taxon>
        <taxon>Mus</taxon>
    </lineage>
</organism>
<evidence type="ECO:0000250" key="1"/>
<evidence type="ECO:0000250" key="2">
    <source>
        <dbReference type="UniProtKB" id="P62166"/>
    </source>
</evidence>
<evidence type="ECO:0000250" key="3">
    <source>
        <dbReference type="UniProtKB" id="P62168"/>
    </source>
</evidence>
<evidence type="ECO:0000255" key="4">
    <source>
        <dbReference type="PROSITE-ProRule" id="PRU00448"/>
    </source>
</evidence>
<evidence type="ECO:0000305" key="5"/>
<name>NCS1_MOUSE</name>
<accession>Q8BNY6</accession>
<accession>A2AJ84</accession>